<gene>
    <name type="ordered locus">Acry_2476</name>
</gene>
<feature type="chain" id="PRO_0000316625" description="Putative pyruvate, phosphate dikinase regulatory protein">
    <location>
        <begin position="1"/>
        <end position="292"/>
    </location>
</feature>
<feature type="binding site" evidence="1">
    <location>
        <begin position="155"/>
        <end position="162"/>
    </location>
    <ligand>
        <name>ADP</name>
        <dbReference type="ChEBI" id="CHEBI:456216"/>
    </ligand>
</feature>
<evidence type="ECO:0000255" key="1">
    <source>
        <dbReference type="HAMAP-Rule" id="MF_00921"/>
    </source>
</evidence>
<proteinExistence type="inferred from homology"/>
<comment type="function">
    <text evidence="1">Bifunctional serine/threonine kinase and phosphorylase involved in the regulation of the pyruvate, phosphate dikinase (PPDK) by catalyzing its phosphorylation/dephosphorylation.</text>
</comment>
<comment type="catalytic activity">
    <reaction evidence="1">
        <text>N(tele)-phospho-L-histidyl/L-threonyl-[pyruvate, phosphate dikinase] + ADP = N(tele)-phospho-L-histidyl/O-phospho-L-threonyl-[pyruvate, phosphate dikinase] + AMP + H(+)</text>
        <dbReference type="Rhea" id="RHEA:43692"/>
        <dbReference type="Rhea" id="RHEA-COMP:10650"/>
        <dbReference type="Rhea" id="RHEA-COMP:10651"/>
        <dbReference type="ChEBI" id="CHEBI:15378"/>
        <dbReference type="ChEBI" id="CHEBI:30013"/>
        <dbReference type="ChEBI" id="CHEBI:61977"/>
        <dbReference type="ChEBI" id="CHEBI:83586"/>
        <dbReference type="ChEBI" id="CHEBI:456215"/>
        <dbReference type="ChEBI" id="CHEBI:456216"/>
        <dbReference type="EC" id="2.7.11.32"/>
    </reaction>
</comment>
<comment type="catalytic activity">
    <reaction evidence="1">
        <text>N(tele)-phospho-L-histidyl/O-phospho-L-threonyl-[pyruvate, phosphate dikinase] + phosphate + H(+) = N(tele)-phospho-L-histidyl/L-threonyl-[pyruvate, phosphate dikinase] + diphosphate</text>
        <dbReference type="Rhea" id="RHEA:43696"/>
        <dbReference type="Rhea" id="RHEA-COMP:10650"/>
        <dbReference type="Rhea" id="RHEA-COMP:10651"/>
        <dbReference type="ChEBI" id="CHEBI:15378"/>
        <dbReference type="ChEBI" id="CHEBI:30013"/>
        <dbReference type="ChEBI" id="CHEBI:33019"/>
        <dbReference type="ChEBI" id="CHEBI:43474"/>
        <dbReference type="ChEBI" id="CHEBI:61977"/>
        <dbReference type="ChEBI" id="CHEBI:83586"/>
        <dbReference type="EC" id="2.7.4.27"/>
    </reaction>
</comment>
<comment type="similarity">
    <text evidence="1">Belongs to the pyruvate, phosphate/water dikinase regulatory protein family. PDRP subfamily.</text>
</comment>
<dbReference type="EC" id="2.7.11.32" evidence="1"/>
<dbReference type="EC" id="2.7.4.27" evidence="1"/>
<dbReference type="EMBL" id="CP000697">
    <property type="protein sequence ID" value="ABQ31668.1"/>
    <property type="molecule type" value="Genomic_DNA"/>
</dbReference>
<dbReference type="SMR" id="A5G1D6"/>
<dbReference type="STRING" id="349163.Acry_2476"/>
<dbReference type="KEGG" id="acr:Acry_2476"/>
<dbReference type="eggNOG" id="COG1806">
    <property type="taxonomic scope" value="Bacteria"/>
</dbReference>
<dbReference type="HOGENOM" id="CLU_046206_2_0_5"/>
<dbReference type="Proteomes" id="UP000000245">
    <property type="component" value="Chromosome"/>
</dbReference>
<dbReference type="GO" id="GO:0043531">
    <property type="term" value="F:ADP binding"/>
    <property type="evidence" value="ECO:0007669"/>
    <property type="project" value="UniProtKB-UniRule"/>
</dbReference>
<dbReference type="GO" id="GO:0005524">
    <property type="term" value="F:ATP binding"/>
    <property type="evidence" value="ECO:0007669"/>
    <property type="project" value="InterPro"/>
</dbReference>
<dbReference type="GO" id="GO:0016776">
    <property type="term" value="F:phosphotransferase activity, phosphate group as acceptor"/>
    <property type="evidence" value="ECO:0007669"/>
    <property type="project" value="UniProtKB-UniRule"/>
</dbReference>
<dbReference type="GO" id="GO:0004674">
    <property type="term" value="F:protein serine/threonine kinase activity"/>
    <property type="evidence" value="ECO:0007669"/>
    <property type="project" value="UniProtKB-UniRule"/>
</dbReference>
<dbReference type="HAMAP" id="MF_00921">
    <property type="entry name" value="PDRP"/>
    <property type="match status" value="1"/>
</dbReference>
<dbReference type="InterPro" id="IPR005177">
    <property type="entry name" value="Kinase-pyrophosphorylase"/>
</dbReference>
<dbReference type="InterPro" id="IPR026565">
    <property type="entry name" value="PPDK_reg"/>
</dbReference>
<dbReference type="NCBIfam" id="NF003742">
    <property type="entry name" value="PRK05339.1"/>
    <property type="match status" value="1"/>
</dbReference>
<dbReference type="PANTHER" id="PTHR31756">
    <property type="entry name" value="PYRUVATE, PHOSPHATE DIKINASE REGULATORY PROTEIN 1, CHLOROPLASTIC"/>
    <property type="match status" value="1"/>
</dbReference>
<dbReference type="PANTHER" id="PTHR31756:SF3">
    <property type="entry name" value="PYRUVATE, PHOSPHATE DIKINASE REGULATORY PROTEIN 1, CHLOROPLASTIC"/>
    <property type="match status" value="1"/>
</dbReference>
<dbReference type="Pfam" id="PF03618">
    <property type="entry name" value="Kinase-PPPase"/>
    <property type="match status" value="1"/>
</dbReference>
<name>PDRP_ACICJ</name>
<accession>A5G1D6</accession>
<organism>
    <name type="scientific">Acidiphilium cryptum (strain JF-5)</name>
    <dbReference type="NCBI Taxonomy" id="349163"/>
    <lineage>
        <taxon>Bacteria</taxon>
        <taxon>Pseudomonadati</taxon>
        <taxon>Pseudomonadota</taxon>
        <taxon>Alphaproteobacteria</taxon>
        <taxon>Acetobacterales</taxon>
        <taxon>Acidocellaceae</taxon>
        <taxon>Acidiphilium</taxon>
    </lineage>
</organism>
<sequence length="292" mass="32253">MRPCMDGKRLNLHLVSDATGDTLNAVARAASVQFEGSDIHLHRWSLIRSRLQLHRVLEGIEAERGPVLCSLLDQALRHELDEACQRLGLRILHVLDPVFDLLAEELGTPTRPTPGRQYVLDADYFRRIDAMHFVLSHDDGQALRGLAEADVILVGVSRSSKTPTSFYLANRGIKAANVPMVPGIELPGVLDDPPCPVVGLFIDAEPLIEIRRHRLTLLGQGGGAAGAFRPDSGDYVDEEAVKAELLWARRTCSARGWPTVNVTRRSIEETAAAVLKLMDAWHERRRRTATSA</sequence>
<reference key="1">
    <citation type="submission" date="2007-05" db="EMBL/GenBank/DDBJ databases">
        <title>Complete sequence of chromosome of Acidiphilium cryptum JF-5.</title>
        <authorList>
            <consortium name="US DOE Joint Genome Institute"/>
            <person name="Copeland A."/>
            <person name="Lucas S."/>
            <person name="Lapidus A."/>
            <person name="Barry K."/>
            <person name="Detter J.C."/>
            <person name="Glavina del Rio T."/>
            <person name="Hammon N."/>
            <person name="Israni S."/>
            <person name="Dalin E."/>
            <person name="Tice H."/>
            <person name="Pitluck S."/>
            <person name="Sims D."/>
            <person name="Brettin T."/>
            <person name="Bruce D."/>
            <person name="Han C."/>
            <person name="Schmutz J."/>
            <person name="Larimer F."/>
            <person name="Land M."/>
            <person name="Hauser L."/>
            <person name="Kyrpides N."/>
            <person name="Kim E."/>
            <person name="Magnuson T."/>
            <person name="Richardson P."/>
        </authorList>
    </citation>
    <scope>NUCLEOTIDE SEQUENCE [LARGE SCALE GENOMIC DNA]</scope>
    <source>
        <strain>JF-5</strain>
    </source>
</reference>
<protein>
    <recommendedName>
        <fullName evidence="1">Putative pyruvate, phosphate dikinase regulatory protein</fullName>
        <shortName evidence="1">PPDK regulatory protein</shortName>
        <ecNumber evidence="1">2.7.11.32</ecNumber>
        <ecNumber evidence="1">2.7.4.27</ecNumber>
    </recommendedName>
</protein>
<keyword id="KW-0418">Kinase</keyword>
<keyword id="KW-0547">Nucleotide-binding</keyword>
<keyword id="KW-1185">Reference proteome</keyword>
<keyword id="KW-0723">Serine/threonine-protein kinase</keyword>
<keyword id="KW-0808">Transferase</keyword>